<reference key="1">
    <citation type="submission" date="2008-05" db="EMBL/GenBank/DDBJ databases">
        <title>Complete sequence of Rhodopseudomonas palustris TIE-1.</title>
        <authorList>
            <consortium name="US DOE Joint Genome Institute"/>
            <person name="Lucas S."/>
            <person name="Copeland A."/>
            <person name="Lapidus A."/>
            <person name="Glavina del Rio T."/>
            <person name="Dalin E."/>
            <person name="Tice H."/>
            <person name="Pitluck S."/>
            <person name="Chain P."/>
            <person name="Malfatti S."/>
            <person name="Shin M."/>
            <person name="Vergez L."/>
            <person name="Lang D."/>
            <person name="Schmutz J."/>
            <person name="Larimer F."/>
            <person name="Land M."/>
            <person name="Hauser L."/>
            <person name="Kyrpides N."/>
            <person name="Mikhailova N."/>
            <person name="Emerson D."/>
            <person name="Newman D.K."/>
            <person name="Roden E."/>
            <person name="Richardson P."/>
        </authorList>
    </citation>
    <scope>NUCLEOTIDE SEQUENCE [LARGE SCALE GENOMIC DNA]</scope>
    <source>
        <strain>TIE-1</strain>
    </source>
</reference>
<protein>
    <recommendedName>
        <fullName evidence="1">Ribosomal RNA small subunit methyltransferase H</fullName>
        <ecNumber evidence="1">2.1.1.199</ecNumber>
    </recommendedName>
    <alternativeName>
        <fullName evidence="1">16S rRNA m(4)C1402 methyltransferase</fullName>
    </alternativeName>
    <alternativeName>
        <fullName evidence="1">rRNA (cytosine-N(4)-)-methyltransferase RsmH</fullName>
    </alternativeName>
</protein>
<keyword id="KW-0963">Cytoplasm</keyword>
<keyword id="KW-0489">Methyltransferase</keyword>
<keyword id="KW-0698">rRNA processing</keyword>
<keyword id="KW-0949">S-adenosyl-L-methionine</keyword>
<keyword id="KW-0808">Transferase</keyword>
<gene>
    <name evidence="1" type="primary">rsmH</name>
    <name type="synonym">mraW</name>
    <name type="ordered locus">Rpal_4056</name>
</gene>
<comment type="function">
    <text evidence="1">Specifically methylates the N4 position of cytidine in position 1402 (C1402) of 16S rRNA.</text>
</comment>
<comment type="catalytic activity">
    <reaction evidence="1">
        <text>cytidine(1402) in 16S rRNA + S-adenosyl-L-methionine = N(4)-methylcytidine(1402) in 16S rRNA + S-adenosyl-L-homocysteine + H(+)</text>
        <dbReference type="Rhea" id="RHEA:42928"/>
        <dbReference type="Rhea" id="RHEA-COMP:10286"/>
        <dbReference type="Rhea" id="RHEA-COMP:10287"/>
        <dbReference type="ChEBI" id="CHEBI:15378"/>
        <dbReference type="ChEBI" id="CHEBI:57856"/>
        <dbReference type="ChEBI" id="CHEBI:59789"/>
        <dbReference type="ChEBI" id="CHEBI:74506"/>
        <dbReference type="ChEBI" id="CHEBI:82748"/>
        <dbReference type="EC" id="2.1.1.199"/>
    </reaction>
</comment>
<comment type="subcellular location">
    <subcellularLocation>
        <location evidence="1">Cytoplasm</location>
    </subcellularLocation>
</comment>
<comment type="similarity">
    <text evidence="1">Belongs to the methyltransferase superfamily. RsmH family.</text>
</comment>
<dbReference type="EC" id="2.1.1.199" evidence="1"/>
<dbReference type="EMBL" id="CP001096">
    <property type="protein sequence ID" value="ACF02552.1"/>
    <property type="molecule type" value="Genomic_DNA"/>
</dbReference>
<dbReference type="RefSeq" id="WP_012496971.1">
    <property type="nucleotide sequence ID" value="NC_011004.1"/>
</dbReference>
<dbReference type="SMR" id="B3QFN9"/>
<dbReference type="KEGG" id="rpt:Rpal_4056"/>
<dbReference type="HOGENOM" id="CLU_038422_1_1_5"/>
<dbReference type="OrthoDB" id="9806637at2"/>
<dbReference type="Proteomes" id="UP000001725">
    <property type="component" value="Chromosome"/>
</dbReference>
<dbReference type="GO" id="GO:0005737">
    <property type="term" value="C:cytoplasm"/>
    <property type="evidence" value="ECO:0007669"/>
    <property type="project" value="UniProtKB-SubCell"/>
</dbReference>
<dbReference type="GO" id="GO:0071424">
    <property type="term" value="F:rRNA (cytosine-N4-)-methyltransferase activity"/>
    <property type="evidence" value="ECO:0007669"/>
    <property type="project" value="UniProtKB-UniRule"/>
</dbReference>
<dbReference type="GO" id="GO:0070475">
    <property type="term" value="P:rRNA base methylation"/>
    <property type="evidence" value="ECO:0007669"/>
    <property type="project" value="UniProtKB-UniRule"/>
</dbReference>
<dbReference type="FunFam" id="1.10.150.170:FF:000003">
    <property type="entry name" value="Ribosomal RNA small subunit methyltransferase H"/>
    <property type="match status" value="1"/>
</dbReference>
<dbReference type="Gene3D" id="1.10.150.170">
    <property type="entry name" value="Putative methyltransferase TM0872, insert domain"/>
    <property type="match status" value="1"/>
</dbReference>
<dbReference type="Gene3D" id="3.40.50.150">
    <property type="entry name" value="Vaccinia Virus protein VP39"/>
    <property type="match status" value="1"/>
</dbReference>
<dbReference type="HAMAP" id="MF_01007">
    <property type="entry name" value="16SrRNA_methyltr_H"/>
    <property type="match status" value="1"/>
</dbReference>
<dbReference type="InterPro" id="IPR002903">
    <property type="entry name" value="RsmH"/>
</dbReference>
<dbReference type="InterPro" id="IPR023397">
    <property type="entry name" value="SAM-dep_MeTrfase_MraW_recog"/>
</dbReference>
<dbReference type="InterPro" id="IPR029063">
    <property type="entry name" value="SAM-dependent_MTases_sf"/>
</dbReference>
<dbReference type="NCBIfam" id="TIGR00006">
    <property type="entry name" value="16S rRNA (cytosine(1402)-N(4))-methyltransferase RsmH"/>
    <property type="match status" value="1"/>
</dbReference>
<dbReference type="PANTHER" id="PTHR11265:SF0">
    <property type="entry name" value="12S RRNA N4-METHYLCYTIDINE METHYLTRANSFERASE"/>
    <property type="match status" value="1"/>
</dbReference>
<dbReference type="PANTHER" id="PTHR11265">
    <property type="entry name" value="S-ADENOSYL-METHYLTRANSFERASE MRAW"/>
    <property type="match status" value="1"/>
</dbReference>
<dbReference type="Pfam" id="PF01795">
    <property type="entry name" value="Methyltransf_5"/>
    <property type="match status" value="1"/>
</dbReference>
<dbReference type="PIRSF" id="PIRSF004486">
    <property type="entry name" value="MraW"/>
    <property type="match status" value="1"/>
</dbReference>
<dbReference type="SUPFAM" id="SSF81799">
    <property type="entry name" value="Putative methyltransferase TM0872, insert domain"/>
    <property type="match status" value="1"/>
</dbReference>
<dbReference type="SUPFAM" id="SSF53335">
    <property type="entry name" value="S-adenosyl-L-methionine-dependent methyltransferases"/>
    <property type="match status" value="1"/>
</dbReference>
<proteinExistence type="inferred from homology"/>
<evidence type="ECO:0000255" key="1">
    <source>
        <dbReference type="HAMAP-Rule" id="MF_01007"/>
    </source>
</evidence>
<evidence type="ECO:0000256" key="2">
    <source>
        <dbReference type="SAM" id="MobiDB-lite"/>
    </source>
</evidence>
<name>RSMH_RHOPT</name>
<sequence>MKPSDTRHIPVLGPEAVGLLAPRAGGIYVDGTFGAGGYTRLILETAGSRVIAIDRDPTAIAGGADLVADAGHRLTLVQDRFSNLADVCAAQGAATVDGVVMDIGVSSMQLDQAERGFSFRFDGPLDMRMGRDGPSAADVVARASETDLANIIYIFGEERYSRHVARAIVAARSDAPITTTKALADIVAKVVRAKPGEIHPATRTFQGLRIFVNEELDELHQALDAAERVLKPGGRLAVVSFHSLEDRIVKTFLTERSKTGGGSRHLPEVAQAAPSFTLLSKRPIVAGDAEVAANPRARSAKLRGAERTEAPAHAAGDLPGWPTLASVMRAGR</sequence>
<accession>B3QFN9</accession>
<feature type="chain" id="PRO_0000387084" description="Ribosomal RNA small subunit methyltransferase H">
    <location>
        <begin position="1"/>
        <end position="332"/>
    </location>
</feature>
<feature type="region of interest" description="Disordered" evidence="2">
    <location>
        <begin position="297"/>
        <end position="318"/>
    </location>
</feature>
<feature type="binding site" evidence="1">
    <location>
        <begin position="36"/>
        <end position="38"/>
    </location>
    <ligand>
        <name>S-adenosyl-L-methionine</name>
        <dbReference type="ChEBI" id="CHEBI:59789"/>
    </ligand>
</feature>
<feature type="binding site" evidence="1">
    <location>
        <position position="54"/>
    </location>
    <ligand>
        <name>S-adenosyl-L-methionine</name>
        <dbReference type="ChEBI" id="CHEBI:59789"/>
    </ligand>
</feature>
<feature type="binding site" evidence="1">
    <location>
        <position position="81"/>
    </location>
    <ligand>
        <name>S-adenosyl-L-methionine</name>
        <dbReference type="ChEBI" id="CHEBI:59789"/>
    </ligand>
</feature>
<feature type="binding site" evidence="1">
    <location>
        <position position="102"/>
    </location>
    <ligand>
        <name>S-adenosyl-L-methionine</name>
        <dbReference type="ChEBI" id="CHEBI:59789"/>
    </ligand>
</feature>
<feature type="binding site" evidence="1">
    <location>
        <position position="109"/>
    </location>
    <ligand>
        <name>S-adenosyl-L-methionine</name>
        <dbReference type="ChEBI" id="CHEBI:59789"/>
    </ligand>
</feature>
<organism>
    <name type="scientific">Rhodopseudomonas palustris (strain TIE-1)</name>
    <dbReference type="NCBI Taxonomy" id="395960"/>
    <lineage>
        <taxon>Bacteria</taxon>
        <taxon>Pseudomonadati</taxon>
        <taxon>Pseudomonadota</taxon>
        <taxon>Alphaproteobacteria</taxon>
        <taxon>Hyphomicrobiales</taxon>
        <taxon>Nitrobacteraceae</taxon>
        <taxon>Rhodopseudomonas</taxon>
    </lineage>
</organism>